<keyword id="KW-0025">Alternative splicing</keyword>
<keyword id="KW-0156">Chromatin regulator</keyword>
<keyword id="KW-0378">Hydrolase</keyword>
<keyword id="KW-0539">Nucleus</keyword>
<keyword id="KW-1267">Proteomics identification</keyword>
<keyword id="KW-1185">Reference proteome</keyword>
<keyword id="KW-0678">Repressor</keyword>
<keyword id="KW-0804">Transcription</keyword>
<keyword id="KW-0805">Transcription regulation</keyword>
<reference key="1">
    <citation type="journal article" date="2004" name="Nat. Genet.">
        <title>Complete sequencing and characterization of 21,243 full-length human cDNAs.</title>
        <authorList>
            <person name="Ota T."/>
            <person name="Suzuki Y."/>
            <person name="Nishikawa T."/>
            <person name="Otsuki T."/>
            <person name="Sugiyama T."/>
            <person name="Irie R."/>
            <person name="Wakamatsu A."/>
            <person name="Hayashi K."/>
            <person name="Sato H."/>
            <person name="Nagai K."/>
            <person name="Kimura K."/>
            <person name="Makita H."/>
            <person name="Sekine M."/>
            <person name="Obayashi M."/>
            <person name="Nishi T."/>
            <person name="Shibahara T."/>
            <person name="Tanaka T."/>
            <person name="Ishii S."/>
            <person name="Yamamoto J."/>
            <person name="Saito K."/>
            <person name="Kawai Y."/>
            <person name="Isono Y."/>
            <person name="Nakamura Y."/>
            <person name="Nagahari K."/>
            <person name="Murakami K."/>
            <person name="Yasuda T."/>
            <person name="Iwayanagi T."/>
            <person name="Wagatsuma M."/>
            <person name="Shiratori A."/>
            <person name="Sudo H."/>
            <person name="Hosoiri T."/>
            <person name="Kaku Y."/>
            <person name="Kodaira H."/>
            <person name="Kondo H."/>
            <person name="Sugawara M."/>
            <person name="Takahashi M."/>
            <person name="Kanda K."/>
            <person name="Yokoi T."/>
            <person name="Furuya T."/>
            <person name="Kikkawa E."/>
            <person name="Omura Y."/>
            <person name="Abe K."/>
            <person name="Kamihara K."/>
            <person name="Katsuta N."/>
            <person name="Sato K."/>
            <person name="Tanikawa M."/>
            <person name="Yamazaki M."/>
            <person name="Ninomiya K."/>
            <person name="Ishibashi T."/>
            <person name="Yamashita H."/>
            <person name="Murakawa K."/>
            <person name="Fujimori K."/>
            <person name="Tanai H."/>
            <person name="Kimata M."/>
            <person name="Watanabe M."/>
            <person name="Hiraoka S."/>
            <person name="Chiba Y."/>
            <person name="Ishida S."/>
            <person name="Ono Y."/>
            <person name="Takiguchi S."/>
            <person name="Watanabe S."/>
            <person name="Yosida M."/>
            <person name="Hotuta T."/>
            <person name="Kusano J."/>
            <person name="Kanehori K."/>
            <person name="Takahashi-Fujii A."/>
            <person name="Hara H."/>
            <person name="Tanase T.-O."/>
            <person name="Nomura Y."/>
            <person name="Togiya S."/>
            <person name="Komai F."/>
            <person name="Hara R."/>
            <person name="Takeuchi K."/>
            <person name="Arita M."/>
            <person name="Imose N."/>
            <person name="Musashino K."/>
            <person name="Yuuki H."/>
            <person name="Oshima A."/>
            <person name="Sasaki N."/>
            <person name="Aotsuka S."/>
            <person name="Yoshikawa Y."/>
            <person name="Matsunawa H."/>
            <person name="Ichihara T."/>
            <person name="Shiohata N."/>
            <person name="Sano S."/>
            <person name="Moriya S."/>
            <person name="Momiyama H."/>
            <person name="Satoh N."/>
            <person name="Takami S."/>
            <person name="Terashima Y."/>
            <person name="Suzuki O."/>
            <person name="Nakagawa S."/>
            <person name="Senoh A."/>
            <person name="Mizoguchi H."/>
            <person name="Goto Y."/>
            <person name="Shimizu F."/>
            <person name="Wakebe H."/>
            <person name="Hishigaki H."/>
            <person name="Watanabe T."/>
            <person name="Sugiyama A."/>
            <person name="Takemoto M."/>
            <person name="Kawakami B."/>
            <person name="Yamazaki M."/>
            <person name="Watanabe K."/>
            <person name="Kumagai A."/>
            <person name="Itakura S."/>
            <person name="Fukuzumi Y."/>
            <person name="Fujimori Y."/>
            <person name="Komiyama M."/>
            <person name="Tashiro H."/>
            <person name="Tanigami A."/>
            <person name="Fujiwara T."/>
            <person name="Ono T."/>
            <person name="Yamada K."/>
            <person name="Fujii Y."/>
            <person name="Ozaki K."/>
            <person name="Hirao M."/>
            <person name="Ohmori Y."/>
            <person name="Kawabata A."/>
            <person name="Hikiji T."/>
            <person name="Kobatake N."/>
            <person name="Inagaki H."/>
            <person name="Ikema Y."/>
            <person name="Okamoto S."/>
            <person name="Okitani R."/>
            <person name="Kawakami T."/>
            <person name="Noguchi S."/>
            <person name="Itoh T."/>
            <person name="Shigeta K."/>
            <person name="Senba T."/>
            <person name="Matsumura K."/>
            <person name="Nakajima Y."/>
            <person name="Mizuno T."/>
            <person name="Morinaga M."/>
            <person name="Sasaki M."/>
            <person name="Togashi T."/>
            <person name="Oyama M."/>
            <person name="Hata H."/>
            <person name="Watanabe M."/>
            <person name="Komatsu T."/>
            <person name="Mizushima-Sugano J."/>
            <person name="Satoh T."/>
            <person name="Shirai Y."/>
            <person name="Takahashi Y."/>
            <person name="Nakagawa K."/>
            <person name="Okumura K."/>
            <person name="Nagase T."/>
            <person name="Nomura N."/>
            <person name="Kikuchi H."/>
            <person name="Masuho Y."/>
            <person name="Yamashita R."/>
            <person name="Nakai K."/>
            <person name="Yada T."/>
            <person name="Nakamura Y."/>
            <person name="Ohara O."/>
            <person name="Isogai T."/>
            <person name="Sugano S."/>
        </authorList>
    </citation>
    <scope>NUCLEOTIDE SEQUENCE [LARGE SCALE MRNA] (ISOFORMS 1 AND 2)</scope>
    <source>
        <tissue>Colon mucosa</tissue>
    </source>
</reference>
<reference key="2">
    <citation type="journal article" date="2006" name="Nature">
        <title>The DNA sequence, annotation and analysis of human chromosome 3.</title>
        <authorList>
            <person name="Muzny D.M."/>
            <person name="Scherer S.E."/>
            <person name="Kaul R."/>
            <person name="Wang J."/>
            <person name="Yu J."/>
            <person name="Sudbrak R."/>
            <person name="Buhay C.J."/>
            <person name="Chen R."/>
            <person name="Cree A."/>
            <person name="Ding Y."/>
            <person name="Dugan-Rocha S."/>
            <person name="Gill R."/>
            <person name="Gunaratne P."/>
            <person name="Harris R.A."/>
            <person name="Hawes A.C."/>
            <person name="Hernandez J."/>
            <person name="Hodgson A.V."/>
            <person name="Hume J."/>
            <person name="Jackson A."/>
            <person name="Khan Z.M."/>
            <person name="Kovar-Smith C."/>
            <person name="Lewis L.R."/>
            <person name="Lozado R.J."/>
            <person name="Metzker M.L."/>
            <person name="Milosavljevic A."/>
            <person name="Miner G.R."/>
            <person name="Morgan M.B."/>
            <person name="Nazareth L.V."/>
            <person name="Scott G."/>
            <person name="Sodergren E."/>
            <person name="Song X.-Z."/>
            <person name="Steffen D."/>
            <person name="Wei S."/>
            <person name="Wheeler D.A."/>
            <person name="Wright M.W."/>
            <person name="Worley K.C."/>
            <person name="Yuan Y."/>
            <person name="Zhang Z."/>
            <person name="Adams C.Q."/>
            <person name="Ansari-Lari M.A."/>
            <person name="Ayele M."/>
            <person name="Brown M.J."/>
            <person name="Chen G."/>
            <person name="Chen Z."/>
            <person name="Clendenning J."/>
            <person name="Clerc-Blankenburg K.P."/>
            <person name="Chen R."/>
            <person name="Chen Z."/>
            <person name="Davis C."/>
            <person name="Delgado O."/>
            <person name="Dinh H.H."/>
            <person name="Dong W."/>
            <person name="Draper H."/>
            <person name="Ernst S."/>
            <person name="Fu G."/>
            <person name="Gonzalez-Garay M.L."/>
            <person name="Garcia D.K."/>
            <person name="Gillett W."/>
            <person name="Gu J."/>
            <person name="Hao B."/>
            <person name="Haugen E."/>
            <person name="Havlak P."/>
            <person name="He X."/>
            <person name="Hennig S."/>
            <person name="Hu S."/>
            <person name="Huang W."/>
            <person name="Jackson L.R."/>
            <person name="Jacob L.S."/>
            <person name="Kelly S.H."/>
            <person name="Kube M."/>
            <person name="Levy R."/>
            <person name="Li Z."/>
            <person name="Liu B."/>
            <person name="Liu J."/>
            <person name="Liu W."/>
            <person name="Lu J."/>
            <person name="Maheshwari M."/>
            <person name="Nguyen B.-V."/>
            <person name="Okwuonu G.O."/>
            <person name="Palmeiri A."/>
            <person name="Pasternak S."/>
            <person name="Perez L.M."/>
            <person name="Phelps K.A."/>
            <person name="Plopper F.J."/>
            <person name="Qiang B."/>
            <person name="Raymond C."/>
            <person name="Rodriguez R."/>
            <person name="Saenphimmachak C."/>
            <person name="Santibanez J."/>
            <person name="Shen H."/>
            <person name="Shen Y."/>
            <person name="Subramanian S."/>
            <person name="Tabor P.E."/>
            <person name="Verduzco D."/>
            <person name="Waldron L."/>
            <person name="Wang J."/>
            <person name="Wang J."/>
            <person name="Wang Q."/>
            <person name="Williams G.A."/>
            <person name="Wong G.K.-S."/>
            <person name="Yao Z."/>
            <person name="Zhang J."/>
            <person name="Zhang X."/>
            <person name="Zhao G."/>
            <person name="Zhou J."/>
            <person name="Zhou Y."/>
            <person name="Nelson D."/>
            <person name="Lehrach H."/>
            <person name="Reinhardt R."/>
            <person name="Naylor S.L."/>
            <person name="Yang H."/>
            <person name="Olson M."/>
            <person name="Weinstock G."/>
            <person name="Gibbs R.A."/>
        </authorList>
    </citation>
    <scope>NUCLEOTIDE SEQUENCE [LARGE SCALE GENOMIC DNA]</scope>
</reference>
<reference key="3">
    <citation type="journal article" date="2004" name="Genome Res.">
        <title>The status, quality, and expansion of the NIH full-length cDNA project: the Mammalian Gene Collection (MGC).</title>
        <authorList>
            <consortium name="The MGC Project Team"/>
        </authorList>
    </citation>
    <scope>NUCLEOTIDE SEQUENCE [LARGE SCALE MRNA] (ISOFORM 1)</scope>
    <source>
        <tissue>Uterus</tissue>
    </source>
</reference>
<reference key="4">
    <citation type="journal article" date="2007" name="BMC Genomics">
        <title>The full-ORF clone resource of the German cDNA consortium.</title>
        <authorList>
            <person name="Bechtel S."/>
            <person name="Rosenfelder H."/>
            <person name="Duda A."/>
            <person name="Schmidt C.P."/>
            <person name="Ernst U."/>
            <person name="Wellenreuther R."/>
            <person name="Mehrle A."/>
            <person name="Schuster C."/>
            <person name="Bahr A."/>
            <person name="Bloecker H."/>
            <person name="Heubner D."/>
            <person name="Hoerlein A."/>
            <person name="Michel G."/>
            <person name="Wedler H."/>
            <person name="Koehrer K."/>
            <person name="Ottenwaelder B."/>
            <person name="Poustka A."/>
            <person name="Wiemann S."/>
            <person name="Schupp I."/>
        </authorList>
    </citation>
    <scope>NUCLEOTIDE SEQUENCE [LARGE SCALE MRNA] OF 113-347 (ISOFORM 1)</scope>
    <source>
        <tissue>Testis</tissue>
    </source>
</reference>
<reference key="5">
    <citation type="journal article" date="2002" name="J. Biol. Chem.">
        <title>Cloning and functional characterization of HDAC11, a novel member of the human histone deacetylase family.</title>
        <authorList>
            <person name="Gao L."/>
            <person name="Cueto M.A."/>
            <person name="Asselbergs F."/>
            <person name="Atadja P."/>
        </authorList>
    </citation>
    <scope>FUNCTION</scope>
    <scope>CATALYTIC ACTIVITY</scope>
    <scope>SUBCELLULAR LOCATION</scope>
    <scope>TISSUE SPECIFICITY</scope>
    <scope>INTERACTION WITH HDAC6</scope>
</reference>
<organism>
    <name type="scientific">Homo sapiens</name>
    <name type="common">Human</name>
    <dbReference type="NCBI Taxonomy" id="9606"/>
    <lineage>
        <taxon>Eukaryota</taxon>
        <taxon>Metazoa</taxon>
        <taxon>Chordata</taxon>
        <taxon>Craniata</taxon>
        <taxon>Vertebrata</taxon>
        <taxon>Euteleostomi</taxon>
        <taxon>Mammalia</taxon>
        <taxon>Eutheria</taxon>
        <taxon>Euarchontoglires</taxon>
        <taxon>Primates</taxon>
        <taxon>Haplorrhini</taxon>
        <taxon>Catarrhini</taxon>
        <taxon>Hominidae</taxon>
        <taxon>Homo</taxon>
    </lineage>
</organism>
<dbReference type="EC" id="3.5.1.98" evidence="2"/>
<dbReference type="EMBL" id="AK025426">
    <property type="protein sequence ID" value="BAB15127.1"/>
    <property type="status" value="ALT_SEQ"/>
    <property type="molecule type" value="mRNA"/>
</dbReference>
<dbReference type="EMBL" id="AK025890">
    <property type="protein sequence ID" value="BAB15272.1"/>
    <property type="molecule type" value="mRNA"/>
</dbReference>
<dbReference type="EMBL" id="AK293223">
    <property type="protein sequence ID" value="BAG56762.1"/>
    <property type="molecule type" value="mRNA"/>
</dbReference>
<dbReference type="EMBL" id="AC027124">
    <property type="status" value="NOT_ANNOTATED_CDS"/>
    <property type="molecule type" value="Genomic_DNA"/>
</dbReference>
<dbReference type="EMBL" id="BC009676">
    <property type="protein sequence ID" value="AAH09676.1"/>
    <property type="molecule type" value="mRNA"/>
</dbReference>
<dbReference type="EMBL" id="AL137362">
    <property type="protein sequence ID" value="CAB70712.1"/>
    <property type="status" value="ALT_FRAME"/>
    <property type="molecule type" value="mRNA"/>
</dbReference>
<dbReference type="CCDS" id="CCDS2615.1">
    <molecule id="Q96DB2-1"/>
</dbReference>
<dbReference type="CCDS" id="CCDS46760.1">
    <molecule id="Q96DB2-2"/>
</dbReference>
<dbReference type="RefSeq" id="NP_001129513.1">
    <molecule id="Q96DB2-2"/>
    <property type="nucleotide sequence ID" value="NM_001136041.3"/>
</dbReference>
<dbReference type="RefSeq" id="NP_079103.2">
    <molecule id="Q96DB2-1"/>
    <property type="nucleotide sequence ID" value="NM_024827.4"/>
</dbReference>
<dbReference type="RefSeq" id="XP_011532437.1">
    <property type="nucleotide sequence ID" value="XM_011534135.1"/>
</dbReference>
<dbReference type="SMR" id="Q96DB2"/>
<dbReference type="BioGRID" id="122970">
    <property type="interactions" value="151"/>
</dbReference>
<dbReference type="CORUM" id="Q96DB2"/>
<dbReference type="FunCoup" id="Q96DB2">
    <property type="interactions" value="289"/>
</dbReference>
<dbReference type="IntAct" id="Q96DB2">
    <property type="interactions" value="143"/>
</dbReference>
<dbReference type="MINT" id="Q96DB2"/>
<dbReference type="STRING" id="9606.ENSP00000295757"/>
<dbReference type="BindingDB" id="Q96DB2"/>
<dbReference type="ChEMBL" id="CHEMBL3310"/>
<dbReference type="DrugBank" id="DB12565">
    <property type="generic name" value="Abexinostat"/>
</dbReference>
<dbReference type="DrugBank" id="DB05015">
    <property type="generic name" value="Belinostat"/>
</dbReference>
<dbReference type="DrugBank" id="DB01262">
    <property type="generic name" value="Decitabine"/>
</dbReference>
<dbReference type="DrugBank" id="DB11841">
    <property type="generic name" value="Entinostat"/>
</dbReference>
<dbReference type="DrugBank" id="DB12645">
    <property type="generic name" value="Givinostat"/>
</dbReference>
<dbReference type="DrugBank" id="DB06603">
    <property type="generic name" value="Panobinostat"/>
</dbReference>
<dbReference type="DrugBank" id="DB06819">
    <property type="generic name" value="Phenylbutyric acid"/>
</dbReference>
<dbReference type="DrugBank" id="DB03766">
    <property type="generic name" value="Propanoic acid"/>
</dbReference>
<dbReference type="DrugBank" id="DB12847">
    <property type="generic name" value="Pyroxamide"/>
</dbReference>
<dbReference type="DrugBank" id="DB06176">
    <property type="generic name" value="Romidepsin"/>
</dbReference>
<dbReference type="DrugBank" id="DB00313">
    <property type="generic name" value="Valproic acid"/>
</dbReference>
<dbReference type="DrugBank" id="DB02546">
    <property type="generic name" value="Vorinostat"/>
</dbReference>
<dbReference type="DrugCentral" id="Q96DB2"/>
<dbReference type="GuidetoPHARMACOLOGY" id="2615"/>
<dbReference type="iPTMnet" id="Q96DB2"/>
<dbReference type="PhosphoSitePlus" id="Q96DB2"/>
<dbReference type="BioMuta" id="HDAC11"/>
<dbReference type="DMDM" id="26394832"/>
<dbReference type="jPOST" id="Q96DB2"/>
<dbReference type="MassIVE" id="Q96DB2"/>
<dbReference type="PaxDb" id="9606-ENSP00000295757"/>
<dbReference type="PeptideAtlas" id="Q96DB2"/>
<dbReference type="ProteomicsDB" id="76267">
    <molecule id="Q96DB2-1"/>
</dbReference>
<dbReference type="ProteomicsDB" id="76268">
    <molecule id="Q96DB2-2"/>
</dbReference>
<dbReference type="Antibodypedia" id="10901">
    <property type="antibodies" value="448 antibodies from 38 providers"/>
</dbReference>
<dbReference type="DNASU" id="79885"/>
<dbReference type="Ensembl" id="ENST00000295757.8">
    <molecule id="Q96DB2-1"/>
    <property type="protein sequence ID" value="ENSP00000295757.3"/>
    <property type="gene ID" value="ENSG00000163517.15"/>
</dbReference>
<dbReference type="Ensembl" id="ENST00000522202.5">
    <molecule id="Q96DB2-2"/>
    <property type="protein sequence ID" value="ENSP00000429794.1"/>
    <property type="gene ID" value="ENSG00000163517.15"/>
</dbReference>
<dbReference type="GeneID" id="79885"/>
<dbReference type="KEGG" id="hsa:79885"/>
<dbReference type="MANE-Select" id="ENST00000295757.8">
    <property type="protein sequence ID" value="ENSP00000295757.3"/>
    <property type="RefSeq nucleotide sequence ID" value="NM_024827.4"/>
    <property type="RefSeq protein sequence ID" value="NP_079103.2"/>
</dbReference>
<dbReference type="UCSC" id="uc003bxy.4">
    <molecule id="Q96DB2-1"/>
    <property type="organism name" value="human"/>
</dbReference>
<dbReference type="AGR" id="HGNC:19086"/>
<dbReference type="CTD" id="79885"/>
<dbReference type="DisGeNET" id="79885"/>
<dbReference type="GeneCards" id="HDAC11"/>
<dbReference type="HGNC" id="HGNC:19086">
    <property type="gene designation" value="HDAC11"/>
</dbReference>
<dbReference type="HPA" id="ENSG00000163517">
    <property type="expression patterns" value="Tissue enhanced (brain, testis)"/>
</dbReference>
<dbReference type="MIM" id="607226">
    <property type="type" value="gene"/>
</dbReference>
<dbReference type="neXtProt" id="NX_Q96DB2"/>
<dbReference type="OpenTargets" id="ENSG00000163517"/>
<dbReference type="PharmGKB" id="PA38793"/>
<dbReference type="VEuPathDB" id="HostDB:ENSG00000163517"/>
<dbReference type="eggNOG" id="KOG1344">
    <property type="taxonomic scope" value="Eukaryota"/>
</dbReference>
<dbReference type="GeneTree" id="ENSGT00940000156308"/>
<dbReference type="InParanoid" id="Q96DB2"/>
<dbReference type="OMA" id="EIGFPWS"/>
<dbReference type="OrthoDB" id="437693at2759"/>
<dbReference type="PAN-GO" id="Q96DB2">
    <property type="GO annotations" value="3 GO annotations based on evolutionary models"/>
</dbReference>
<dbReference type="PhylomeDB" id="Q96DB2"/>
<dbReference type="TreeFam" id="TF106176"/>
<dbReference type="BRENDA" id="3.5.1.98">
    <property type="organism ID" value="2681"/>
</dbReference>
<dbReference type="PathwayCommons" id="Q96DB2"/>
<dbReference type="Reactome" id="R-HSA-2122947">
    <property type="pathway name" value="NOTCH1 Intracellular Domain Regulates Transcription"/>
</dbReference>
<dbReference type="Reactome" id="R-HSA-2644606">
    <property type="pathway name" value="Constitutive Signaling by NOTCH1 PEST Domain Mutants"/>
</dbReference>
<dbReference type="Reactome" id="R-HSA-2894862">
    <property type="pathway name" value="Constitutive Signaling by NOTCH1 HD+PEST Domain Mutants"/>
</dbReference>
<dbReference type="Reactome" id="R-HSA-350054">
    <property type="pathway name" value="Notch-HLH transcription pathway"/>
</dbReference>
<dbReference type="SignaLink" id="Q96DB2"/>
<dbReference type="SIGNOR" id="Q96DB2"/>
<dbReference type="BioGRID-ORCS" id="79885">
    <property type="hits" value="14 hits in 1172 CRISPR screens"/>
</dbReference>
<dbReference type="ChiTaRS" id="HDAC11">
    <property type="organism name" value="human"/>
</dbReference>
<dbReference type="GeneWiki" id="HDAC11"/>
<dbReference type="GenomeRNAi" id="79885"/>
<dbReference type="Pharos" id="Q96DB2">
    <property type="development level" value="Tclin"/>
</dbReference>
<dbReference type="PRO" id="PR:Q96DB2"/>
<dbReference type="Proteomes" id="UP000005640">
    <property type="component" value="Chromosome 3"/>
</dbReference>
<dbReference type="RNAct" id="Q96DB2">
    <property type="molecule type" value="protein"/>
</dbReference>
<dbReference type="Bgee" id="ENSG00000163517">
    <property type="expression patterns" value="Expressed in left testis and 174 other cell types or tissues"/>
</dbReference>
<dbReference type="ExpressionAtlas" id="Q96DB2">
    <property type="expression patterns" value="baseline and differential"/>
</dbReference>
<dbReference type="GO" id="GO:0000118">
    <property type="term" value="C:histone deacetylase complex"/>
    <property type="evidence" value="ECO:0000314"/>
    <property type="project" value="UniProtKB"/>
</dbReference>
<dbReference type="GO" id="GO:0005634">
    <property type="term" value="C:nucleus"/>
    <property type="evidence" value="ECO:0000314"/>
    <property type="project" value="UniProtKB"/>
</dbReference>
<dbReference type="GO" id="GO:0005886">
    <property type="term" value="C:plasma membrane"/>
    <property type="evidence" value="ECO:0000314"/>
    <property type="project" value="LIFEdb"/>
</dbReference>
<dbReference type="GO" id="GO:0140297">
    <property type="term" value="F:DNA-binding transcription factor binding"/>
    <property type="evidence" value="ECO:0000304"/>
    <property type="project" value="UniProtKB"/>
</dbReference>
<dbReference type="GO" id="GO:0004407">
    <property type="term" value="F:histone deacetylase activity"/>
    <property type="evidence" value="ECO:0000318"/>
    <property type="project" value="GO_Central"/>
</dbReference>
<dbReference type="GO" id="GO:0141221">
    <property type="term" value="F:histone deacetylase activity, hydrolytic mechanism"/>
    <property type="evidence" value="ECO:0000314"/>
    <property type="project" value="UniProtKB"/>
</dbReference>
<dbReference type="GO" id="GO:0006325">
    <property type="term" value="P:chromatin organization"/>
    <property type="evidence" value="ECO:0000304"/>
    <property type="project" value="UniProtKB"/>
</dbReference>
<dbReference type="GO" id="GO:0040029">
    <property type="term" value="P:epigenetic regulation of gene expression"/>
    <property type="evidence" value="ECO:0000318"/>
    <property type="project" value="GO_Central"/>
</dbReference>
<dbReference type="CDD" id="cd09993">
    <property type="entry name" value="HDAC_classIV"/>
    <property type="match status" value="1"/>
</dbReference>
<dbReference type="FunFam" id="3.40.800.20:FF:000009">
    <property type="entry name" value="Histone deacetylase 11"/>
    <property type="match status" value="1"/>
</dbReference>
<dbReference type="Gene3D" id="3.40.800.20">
    <property type="entry name" value="Histone deacetylase domain"/>
    <property type="match status" value="1"/>
</dbReference>
<dbReference type="InterPro" id="IPR044150">
    <property type="entry name" value="HDAC_classIV"/>
</dbReference>
<dbReference type="InterPro" id="IPR050284">
    <property type="entry name" value="HDAC_PDAC"/>
</dbReference>
<dbReference type="InterPro" id="IPR000286">
    <property type="entry name" value="His_deacetylse"/>
</dbReference>
<dbReference type="InterPro" id="IPR023801">
    <property type="entry name" value="His_deacetylse_dom"/>
</dbReference>
<dbReference type="InterPro" id="IPR037138">
    <property type="entry name" value="His_deacetylse_dom_sf"/>
</dbReference>
<dbReference type="InterPro" id="IPR023696">
    <property type="entry name" value="Ureohydrolase_dom_sf"/>
</dbReference>
<dbReference type="PANTHER" id="PTHR10625:SF23">
    <property type="entry name" value="HISTONE DEACETYLASE 11"/>
    <property type="match status" value="1"/>
</dbReference>
<dbReference type="PANTHER" id="PTHR10625">
    <property type="entry name" value="HISTONE DEACETYLASE HDAC1-RELATED"/>
    <property type="match status" value="1"/>
</dbReference>
<dbReference type="Pfam" id="PF00850">
    <property type="entry name" value="Hist_deacetyl"/>
    <property type="match status" value="1"/>
</dbReference>
<dbReference type="PRINTS" id="PR01270">
    <property type="entry name" value="HDASUPER"/>
</dbReference>
<dbReference type="SUPFAM" id="SSF52768">
    <property type="entry name" value="Arginase/deacetylase"/>
    <property type="match status" value="1"/>
</dbReference>
<accession>Q96DB2</accession>
<accession>B4DDK1</accession>
<accession>Q9H6I7</accession>
<accession>Q9H6X3</accession>
<accession>Q9NTC9</accession>
<evidence type="ECO:0000250" key="1"/>
<evidence type="ECO:0000269" key="2">
    <source>
    </source>
</evidence>
<evidence type="ECO:0000303" key="3">
    <source>
    </source>
</evidence>
<evidence type="ECO:0000305" key="4"/>
<protein>
    <recommendedName>
        <fullName>Histone deacetylase 11</fullName>
        <shortName>HD11</shortName>
        <ecNumber evidence="2">3.5.1.98</ecNumber>
    </recommendedName>
</protein>
<name>HDA11_HUMAN</name>
<sequence>MLHTTQLYQHVPETRWPIVYSPRYNITFMGLEKLHPFDAGKWGKVINFLKEEKLLSDSMLVEAREASEEDLLVVHTRRYLNELKWSFAVATITEIPPVIFLPNFLVQRKVLRPLRTQTGGTIMAGKLAVERGWAINVGGGFHHCSSDRGGGFCAYADITLAIKFLFERVEGISRATIIDLDAHQGNGHERDFMDDKRVYIMDVYNRHIYPGDRFAKQAIRRKVELEWGTEDDEYLDKVERNIKKSLQEHLPDVVVYNAGTDILEGDRLGGLSISPAGIVKRDELVFRMVRGRRVPILMVTSGGYQKRTARIIADSILNLFGLGLIGPESPSVSAQNSDTPLLPPAVP</sequence>
<comment type="function">
    <text evidence="2">Responsible for the deacetylation of lysine residues on the N-terminal part of the core histones (H2A, H2B, H3 and H4). Histone deacetylation gives a tag for epigenetic repression and plays an important role in transcriptional regulation, cell cycle progression and developmental events. Histone deacetylases act via the formation of large multiprotein complexes.</text>
</comment>
<comment type="catalytic activity">
    <reaction evidence="2">
        <text>N(6)-acetyl-L-lysyl-[histone] + H2O = L-lysyl-[histone] + acetate</text>
        <dbReference type="Rhea" id="RHEA:58196"/>
        <dbReference type="Rhea" id="RHEA-COMP:9845"/>
        <dbReference type="Rhea" id="RHEA-COMP:11338"/>
        <dbReference type="ChEBI" id="CHEBI:15377"/>
        <dbReference type="ChEBI" id="CHEBI:29969"/>
        <dbReference type="ChEBI" id="CHEBI:30089"/>
        <dbReference type="ChEBI" id="CHEBI:61930"/>
        <dbReference type="EC" id="3.5.1.98"/>
    </reaction>
</comment>
<comment type="subunit">
    <text evidence="2">Interacts with HDAC6.</text>
</comment>
<comment type="interaction">
    <interactant intactId="EBI-301713">
        <id>Q96DB2</id>
    </interactant>
    <interactant intactId="EBI-10262547">
        <id>Q8IXM6</id>
        <label>NRM</label>
    </interactant>
    <organismsDiffer>false</organismsDiffer>
    <experiments>3</experiments>
</comment>
<comment type="subcellular location">
    <subcellularLocation>
        <location evidence="2">Nucleus</location>
    </subcellularLocation>
</comment>
<comment type="alternative products">
    <event type="alternative splicing"/>
    <isoform>
        <id>Q96DB2-1</id>
        <name>1</name>
        <sequence type="displayed"/>
    </isoform>
    <isoform>
        <id>Q96DB2-2</id>
        <name>2</name>
        <sequence type="described" ref="VSP_043082 VSP_043083"/>
    </isoform>
</comment>
<comment type="tissue specificity">
    <text evidence="2">Weakly expressed in most tissues. Strongly expressed in brain, heart, skeletal muscle, kidney and testis.</text>
</comment>
<comment type="miscellaneous">
    <text>Its activity is inhibited by trapoxin, a known histone deacetylase inhibitor.</text>
</comment>
<comment type="similarity">
    <text evidence="4">Belongs to the histone deacetylase family.</text>
</comment>
<comment type="sequence caution" evidence="4">
    <conflict type="erroneous termination">
        <sequence resource="EMBL-CDS" id="BAB15127"/>
    </conflict>
    <text>Truncated C-terminus.</text>
</comment>
<comment type="sequence caution" evidence="4">
    <conflict type="frameshift">
        <sequence resource="EMBL-CDS" id="CAB70712"/>
    </conflict>
</comment>
<proteinExistence type="evidence at protein level"/>
<feature type="chain" id="PRO_0000114715" description="Histone deacetylase 11">
    <location>
        <begin position="1"/>
        <end position="347"/>
    </location>
</feature>
<feature type="region of interest" description="Histone deacetylase">
    <location>
        <begin position="14"/>
        <end position="326"/>
    </location>
</feature>
<feature type="active site" evidence="1">
    <location>
        <position position="143"/>
    </location>
</feature>
<feature type="splice variant" id="VSP_043082" description="In isoform 2." evidence="3">
    <location>
        <begin position="1"/>
        <end position="28"/>
    </location>
</feature>
<feature type="splice variant" id="VSP_043083" description="In isoform 2." evidence="3">
    <location>
        <begin position="85"/>
        <end position="107"/>
    </location>
</feature>
<feature type="sequence conflict" description="In Ref. 1; BAB15272." evidence="4" ref="1">
    <original>R</original>
    <variation>P</variation>
    <location>
        <position position="15"/>
    </location>
</feature>
<feature type="sequence conflict" description="In Ref. 4; CAB70712." evidence="4" ref="4">
    <original>P</original>
    <variation>A</variation>
    <location>
        <position position="113"/>
    </location>
</feature>
<feature type="sequence conflict" description="In Ref. 4; CAB70712." evidence="4" ref="4">
    <original>D</original>
    <variation>Y</variation>
    <location>
        <position position="212"/>
    </location>
</feature>
<gene>
    <name type="primary">HDAC11</name>
</gene>